<name>TCTP_YARLI</name>
<keyword id="KW-0963">Cytoplasm</keyword>
<keyword id="KW-0206">Cytoskeleton</keyword>
<keyword id="KW-0493">Microtubule</keyword>
<keyword id="KW-0648">Protein biosynthesis</keyword>
<keyword id="KW-1185">Reference proteome</keyword>
<protein>
    <recommendedName>
        <fullName>Translationally-controlled tumor protein homolog</fullName>
        <shortName>TCTP</shortName>
    </recommendedName>
</protein>
<organism>
    <name type="scientific">Yarrowia lipolytica (strain CLIB 122 / E 150)</name>
    <name type="common">Yeast</name>
    <name type="synonym">Candida lipolytica</name>
    <dbReference type="NCBI Taxonomy" id="284591"/>
    <lineage>
        <taxon>Eukaryota</taxon>
        <taxon>Fungi</taxon>
        <taxon>Dikarya</taxon>
        <taxon>Ascomycota</taxon>
        <taxon>Saccharomycotina</taxon>
        <taxon>Dipodascomycetes</taxon>
        <taxon>Dipodascales</taxon>
        <taxon>Dipodascales incertae sedis</taxon>
        <taxon>Yarrowia</taxon>
    </lineage>
</organism>
<feature type="chain" id="PRO_0000252328" description="Translationally-controlled tumor protein homolog">
    <location>
        <begin position="1"/>
        <end position="167"/>
    </location>
</feature>
<feature type="domain" description="TCTP" evidence="2">
    <location>
        <begin position="1"/>
        <end position="167"/>
    </location>
</feature>
<reference key="1">
    <citation type="journal article" date="2004" name="Nature">
        <title>Genome evolution in yeasts.</title>
        <authorList>
            <person name="Dujon B."/>
            <person name="Sherman D."/>
            <person name="Fischer G."/>
            <person name="Durrens P."/>
            <person name="Casaregola S."/>
            <person name="Lafontaine I."/>
            <person name="de Montigny J."/>
            <person name="Marck C."/>
            <person name="Neuveglise C."/>
            <person name="Talla E."/>
            <person name="Goffard N."/>
            <person name="Frangeul L."/>
            <person name="Aigle M."/>
            <person name="Anthouard V."/>
            <person name="Babour A."/>
            <person name="Barbe V."/>
            <person name="Barnay S."/>
            <person name="Blanchin S."/>
            <person name="Beckerich J.-M."/>
            <person name="Beyne E."/>
            <person name="Bleykasten C."/>
            <person name="Boisrame A."/>
            <person name="Boyer J."/>
            <person name="Cattolico L."/>
            <person name="Confanioleri F."/>
            <person name="de Daruvar A."/>
            <person name="Despons L."/>
            <person name="Fabre E."/>
            <person name="Fairhead C."/>
            <person name="Ferry-Dumazet H."/>
            <person name="Groppi A."/>
            <person name="Hantraye F."/>
            <person name="Hennequin C."/>
            <person name="Jauniaux N."/>
            <person name="Joyet P."/>
            <person name="Kachouri R."/>
            <person name="Kerrest A."/>
            <person name="Koszul R."/>
            <person name="Lemaire M."/>
            <person name="Lesur I."/>
            <person name="Ma L."/>
            <person name="Muller H."/>
            <person name="Nicaud J.-M."/>
            <person name="Nikolski M."/>
            <person name="Oztas S."/>
            <person name="Ozier-Kalogeropoulos O."/>
            <person name="Pellenz S."/>
            <person name="Potier S."/>
            <person name="Richard G.-F."/>
            <person name="Straub M.-L."/>
            <person name="Suleau A."/>
            <person name="Swennen D."/>
            <person name="Tekaia F."/>
            <person name="Wesolowski-Louvel M."/>
            <person name="Westhof E."/>
            <person name="Wirth B."/>
            <person name="Zeniou-Meyer M."/>
            <person name="Zivanovic Y."/>
            <person name="Bolotin-Fukuhara M."/>
            <person name="Thierry A."/>
            <person name="Bouchier C."/>
            <person name="Caudron B."/>
            <person name="Scarpelli C."/>
            <person name="Gaillardin C."/>
            <person name="Weissenbach J."/>
            <person name="Wincker P."/>
            <person name="Souciet J.-L."/>
        </authorList>
    </citation>
    <scope>NUCLEOTIDE SEQUENCE [LARGE SCALE GENOMIC DNA]</scope>
    <source>
        <strain>CLIB 122 / E 150</strain>
    </source>
</reference>
<comment type="function">
    <text evidence="1">Involved in protein synthesis. Involved in microtubule stabilization (By similarity).</text>
</comment>
<comment type="subcellular location">
    <subcellularLocation>
        <location evidence="1">Cytoplasm</location>
        <location evidence="1">Cytoskeleton</location>
    </subcellularLocation>
</comment>
<comment type="similarity">
    <text evidence="2">Belongs to the TCTP family.</text>
</comment>
<evidence type="ECO:0000250" key="1"/>
<evidence type="ECO:0000255" key="2">
    <source>
        <dbReference type="PROSITE-ProRule" id="PRU01133"/>
    </source>
</evidence>
<sequence length="167" mass="18900">MIIFKDVISNDEMCSDAFEPKVVDNVVYEVDCTMIQVAEGDVDIGANPSAEDAEEGVDSDVQTVNNVVHSFRLQSTGFDKKSYLTYLKGYMKSIKNYLAENKPEEVENFEKGAQAYAKKIVANFKDFDFYTGESMDPDGMVALLNYREDGTTPYLIFWKHGIKEEKI</sequence>
<proteinExistence type="inferred from homology"/>
<accession>Q6C4G1</accession>
<gene>
    <name type="ordered locus">YALI0E27071g</name>
</gene>
<dbReference type="EMBL" id="CR382131">
    <property type="protein sequence ID" value="CAG80052.1"/>
    <property type="molecule type" value="Genomic_DNA"/>
</dbReference>
<dbReference type="RefSeq" id="XP_504451.1">
    <property type="nucleotide sequence ID" value="XM_504451.1"/>
</dbReference>
<dbReference type="SMR" id="Q6C4G1"/>
<dbReference type="FunCoup" id="Q6C4G1">
    <property type="interactions" value="895"/>
</dbReference>
<dbReference type="STRING" id="284591.Q6C4G1"/>
<dbReference type="EnsemblFungi" id="CAG80052">
    <property type="protein sequence ID" value="CAG80052"/>
    <property type="gene ID" value="YALI0_E27071g"/>
</dbReference>
<dbReference type="KEGG" id="yli:2912774"/>
<dbReference type="VEuPathDB" id="FungiDB:YALI0_E27071g"/>
<dbReference type="HOGENOM" id="CLU_095877_0_0_1"/>
<dbReference type="InParanoid" id="Q6C4G1"/>
<dbReference type="OMA" id="AYNKCIK"/>
<dbReference type="OrthoDB" id="938at4891"/>
<dbReference type="Proteomes" id="UP000001300">
    <property type="component" value="Chromosome E"/>
</dbReference>
<dbReference type="GO" id="GO:0005737">
    <property type="term" value="C:cytoplasm"/>
    <property type="evidence" value="ECO:0000318"/>
    <property type="project" value="GO_Central"/>
</dbReference>
<dbReference type="GO" id="GO:0005874">
    <property type="term" value="C:microtubule"/>
    <property type="evidence" value="ECO:0007669"/>
    <property type="project" value="UniProtKB-KW"/>
</dbReference>
<dbReference type="GO" id="GO:0005509">
    <property type="term" value="F:calcium ion binding"/>
    <property type="evidence" value="ECO:0000318"/>
    <property type="project" value="GO_Central"/>
</dbReference>
<dbReference type="GO" id="GO:0006412">
    <property type="term" value="P:translation"/>
    <property type="evidence" value="ECO:0007669"/>
    <property type="project" value="UniProtKB-KW"/>
</dbReference>
<dbReference type="FunFam" id="2.170.150.10:FF:000002">
    <property type="entry name" value="Translationally-controlled tumor protein homolog"/>
    <property type="match status" value="1"/>
</dbReference>
<dbReference type="Gene3D" id="2.170.150.10">
    <property type="entry name" value="Metal Binding Protein, Guanine Nucleotide Exchange Factor, Chain A"/>
    <property type="match status" value="1"/>
</dbReference>
<dbReference type="InterPro" id="IPR011057">
    <property type="entry name" value="Mss4-like_sf"/>
</dbReference>
<dbReference type="InterPro" id="IPR011323">
    <property type="entry name" value="Mss4/transl-control_tumour"/>
</dbReference>
<dbReference type="InterPro" id="IPR034737">
    <property type="entry name" value="TCTP"/>
</dbReference>
<dbReference type="InterPro" id="IPR018103">
    <property type="entry name" value="Translation_control_tumour_CS"/>
</dbReference>
<dbReference type="InterPro" id="IPR018105">
    <property type="entry name" value="Translational_control_tumour_p"/>
</dbReference>
<dbReference type="PANTHER" id="PTHR11991">
    <property type="entry name" value="TRANSLATIONALLY CONTROLLED TUMOR PROTEIN-RELATED"/>
    <property type="match status" value="1"/>
</dbReference>
<dbReference type="PANTHER" id="PTHR11991:SF0">
    <property type="entry name" value="TRANSLATIONALLY-CONTROLLED TUMOR PROTEIN"/>
    <property type="match status" value="1"/>
</dbReference>
<dbReference type="Pfam" id="PF00838">
    <property type="entry name" value="TCTP"/>
    <property type="match status" value="1"/>
</dbReference>
<dbReference type="PRINTS" id="PR01653">
    <property type="entry name" value="TCTPROTEIN"/>
</dbReference>
<dbReference type="SUPFAM" id="SSF51316">
    <property type="entry name" value="Mss4-like"/>
    <property type="match status" value="1"/>
</dbReference>
<dbReference type="PROSITE" id="PS01002">
    <property type="entry name" value="TCTP_1"/>
    <property type="match status" value="1"/>
</dbReference>
<dbReference type="PROSITE" id="PS01003">
    <property type="entry name" value="TCTP_2"/>
    <property type="match status" value="1"/>
</dbReference>
<dbReference type="PROSITE" id="PS51797">
    <property type="entry name" value="TCTP_3"/>
    <property type="match status" value="1"/>
</dbReference>